<protein>
    <recommendedName>
        <fullName>Defensin-like protein 1</fullName>
    </recommendedName>
    <alternativeName>
        <fullName>Cysteine-rich antifungal protein 1</fullName>
        <shortName>AFP1</shortName>
    </alternativeName>
</protein>
<reference key="1">
    <citation type="journal article" date="1995" name="Plant Cell">
        <title>Small cysteine-rich antifungal proteins from radish: their role in host defense.</title>
        <authorList>
            <person name="Terras F.R.G."/>
            <person name="Eggermont K."/>
            <person name="Kovaleva V."/>
            <person name="Raikhel N.V."/>
            <person name="Osborn R.W."/>
            <person name="Kester A."/>
            <person name="Rees S.B."/>
            <person name="Torrekens S."/>
            <person name="van Leuven F."/>
            <person name="Vanderleyden J."/>
            <person name="Cammue B.P.A."/>
            <person name="Broekaert W.F."/>
        </authorList>
    </citation>
    <scope>NUCLEOTIDE SEQUENCE [MRNA]</scope>
    <source>
        <strain>cv. Ronde Rode Kleine Witpunt</strain>
        <tissue>Seed</tissue>
    </source>
</reference>
<reference key="2">
    <citation type="journal article" date="1992" name="J. Biol. Chem.">
        <title>Analysis of two novel classes of plant antifungal proteins from radish (Raphanus sativus L.) seeds.</title>
        <authorList>
            <person name="Terras F.R.G."/>
            <person name="Schoofs H.M.E."/>
            <person name="de Bolle M.F.C."/>
            <person name="van Leuven F."/>
            <person name="Rees S.B."/>
            <person name="Vanderleyden J."/>
            <person name="Cammue B.P.A."/>
            <person name="Broekaert W.F."/>
        </authorList>
    </citation>
    <scope>PROTEIN SEQUENCE OF 30-73</scope>
    <source>
        <tissue>Seed</tissue>
    </source>
</reference>
<reference key="3">
    <citation type="journal article" date="1998" name="J. Mol. Biol.">
        <title>Determination of the three-dimensional solution structure of Raphanus sativus antifungal protein 1 by 1H NMR.</title>
        <authorList>
            <person name="Fant F."/>
            <person name="Vranken W.F."/>
            <person name="Broekaert W.F."/>
            <person name="Borremans F.A.M."/>
        </authorList>
    </citation>
    <scope>STRUCTURE BY NMR OF 30-80</scope>
    <scope>DISULFIDE BONDS</scope>
</reference>
<accession>P69241</accession>
<accession>P30225</accession>
<accession>Q41163</accession>
<name>DEF1_RAPSA</name>
<keyword id="KW-0002">3D-structure</keyword>
<keyword id="KW-0929">Antimicrobial</keyword>
<keyword id="KW-0903">Direct protein sequencing</keyword>
<keyword id="KW-1015">Disulfide bond</keyword>
<keyword id="KW-0295">Fungicide</keyword>
<keyword id="KW-0611">Plant defense</keyword>
<keyword id="KW-0873">Pyrrolidone carboxylic acid</keyword>
<keyword id="KW-1185">Reference proteome</keyword>
<keyword id="KW-0964">Secreted</keyword>
<keyword id="KW-0732">Signal</keyword>
<feature type="signal peptide" evidence="2">
    <location>
        <begin position="1"/>
        <end position="29"/>
    </location>
</feature>
<feature type="chain" id="PRO_0000007034" description="Defensin-like protein 1">
    <location>
        <begin position="30"/>
        <end position="80"/>
    </location>
</feature>
<feature type="modified residue" description="Pyrrolidone carboxylic acid" evidence="1">
    <location>
        <position position="30"/>
    </location>
</feature>
<feature type="disulfide bond" evidence="3 5">
    <location>
        <begin position="33"/>
        <end position="80"/>
    </location>
</feature>
<feature type="disulfide bond" evidence="3 5">
    <location>
        <begin position="44"/>
        <end position="65"/>
    </location>
</feature>
<feature type="disulfide bond" evidence="3 5">
    <location>
        <begin position="50"/>
        <end position="74"/>
    </location>
</feature>
<feature type="disulfide bond" evidence="3 5">
    <location>
        <begin position="54"/>
        <end position="76"/>
    </location>
</feature>
<feature type="strand" evidence="6">
    <location>
        <begin position="33"/>
        <end position="36"/>
    </location>
</feature>
<feature type="helix" evidence="6">
    <location>
        <begin position="47"/>
        <end position="57"/>
    </location>
</feature>
<feature type="strand" evidence="6">
    <location>
        <begin position="63"/>
        <end position="66"/>
    </location>
</feature>
<feature type="strand" evidence="6">
    <location>
        <begin position="69"/>
        <end position="71"/>
    </location>
</feature>
<feature type="strand" evidence="6">
    <location>
        <begin position="73"/>
        <end position="78"/>
    </location>
</feature>
<comment type="function">
    <text>Possesses antifungal activity sensitive to inorganic cations.</text>
</comment>
<comment type="subunit">
    <text>Forms oligomers in its native state.</text>
</comment>
<comment type="subcellular location">
    <subcellularLocation>
        <location>Secreted</location>
    </subcellularLocation>
</comment>
<comment type="similarity">
    <text evidence="4">Belongs to the DEFL family.</text>
</comment>
<evidence type="ECO:0000250" key="1">
    <source>
        <dbReference type="UniProtKB" id="P30231"/>
    </source>
</evidence>
<evidence type="ECO:0000269" key="2">
    <source>
    </source>
</evidence>
<evidence type="ECO:0000269" key="3">
    <source>
    </source>
</evidence>
<evidence type="ECO:0000305" key="4"/>
<evidence type="ECO:0007744" key="5">
    <source>
        <dbReference type="PDB" id="1AYJ"/>
    </source>
</evidence>
<evidence type="ECO:0007829" key="6">
    <source>
        <dbReference type="PDB" id="1AYJ"/>
    </source>
</evidence>
<dbReference type="EMBL" id="U18557">
    <property type="protein sequence ID" value="AAA69541.1"/>
    <property type="molecule type" value="mRNA"/>
</dbReference>
<dbReference type="PIR" id="T10176">
    <property type="entry name" value="T10176"/>
</dbReference>
<dbReference type="RefSeq" id="XP_018469135.1">
    <property type="nucleotide sequence ID" value="XM_018613633.1"/>
</dbReference>
<dbReference type="PDB" id="1AYJ">
    <property type="method" value="NMR"/>
    <property type="chains" value="A=31-80"/>
</dbReference>
<dbReference type="PDBsum" id="1AYJ"/>
<dbReference type="BMRB" id="P69241"/>
<dbReference type="SMR" id="P69241"/>
<dbReference type="TCDB" id="1.C.45.1.1">
    <property type="family name" value="the plant defensin (plant defensin) family"/>
</dbReference>
<dbReference type="GeneID" id="108840814"/>
<dbReference type="KEGG" id="rsz:108840814"/>
<dbReference type="OrthoDB" id="1851987at2759"/>
<dbReference type="EvolutionaryTrace" id="P69241"/>
<dbReference type="Proteomes" id="UP000504610">
    <property type="component" value="Chromosome 2"/>
</dbReference>
<dbReference type="GO" id="GO:0005576">
    <property type="term" value="C:extracellular region"/>
    <property type="evidence" value="ECO:0007669"/>
    <property type="project" value="UniProtKB-SubCell"/>
</dbReference>
<dbReference type="GO" id="GO:0050832">
    <property type="term" value="P:defense response to fungus"/>
    <property type="evidence" value="ECO:0007669"/>
    <property type="project" value="UniProtKB-KW"/>
</dbReference>
<dbReference type="GO" id="GO:0031640">
    <property type="term" value="P:killing of cells of another organism"/>
    <property type="evidence" value="ECO:0007669"/>
    <property type="project" value="UniProtKB-KW"/>
</dbReference>
<dbReference type="CDD" id="cd00107">
    <property type="entry name" value="Knot1"/>
    <property type="match status" value="1"/>
</dbReference>
<dbReference type="FunFam" id="3.30.30.10:FF:000003">
    <property type="entry name" value="Defensin-like protein 1"/>
    <property type="match status" value="1"/>
</dbReference>
<dbReference type="Gene3D" id="3.30.30.10">
    <property type="entry name" value="Knottin, scorpion toxin-like"/>
    <property type="match status" value="1"/>
</dbReference>
<dbReference type="InterPro" id="IPR008176">
    <property type="entry name" value="Defensin_plant"/>
</dbReference>
<dbReference type="InterPro" id="IPR003614">
    <property type="entry name" value="Scorpion_toxin-like"/>
</dbReference>
<dbReference type="InterPro" id="IPR036574">
    <property type="entry name" value="Scorpion_toxin-like_sf"/>
</dbReference>
<dbReference type="PANTHER" id="PTHR33147">
    <property type="entry name" value="DEFENSIN-LIKE PROTEIN 1"/>
    <property type="match status" value="1"/>
</dbReference>
<dbReference type="PANTHER" id="PTHR33147:SF101">
    <property type="entry name" value="DEFENSIN-LIKE PROTEIN 13"/>
    <property type="match status" value="1"/>
</dbReference>
<dbReference type="Pfam" id="PF00304">
    <property type="entry name" value="Gamma-thionin"/>
    <property type="match status" value="1"/>
</dbReference>
<dbReference type="SMART" id="SM00505">
    <property type="entry name" value="Knot1"/>
    <property type="match status" value="1"/>
</dbReference>
<dbReference type="SUPFAM" id="SSF57095">
    <property type="entry name" value="Scorpion toxin-like"/>
    <property type="match status" value="1"/>
</dbReference>
<dbReference type="PROSITE" id="PS00940">
    <property type="entry name" value="GAMMA_THIONIN"/>
    <property type="match status" value="1"/>
</dbReference>
<gene>
    <name type="primary">AFP1</name>
</gene>
<organism>
    <name type="scientific">Raphanus sativus</name>
    <name type="common">Radish</name>
    <name type="synonym">Raphanus raphanistrum var. sativus</name>
    <dbReference type="NCBI Taxonomy" id="3726"/>
    <lineage>
        <taxon>Eukaryota</taxon>
        <taxon>Viridiplantae</taxon>
        <taxon>Streptophyta</taxon>
        <taxon>Embryophyta</taxon>
        <taxon>Tracheophyta</taxon>
        <taxon>Spermatophyta</taxon>
        <taxon>Magnoliopsida</taxon>
        <taxon>eudicotyledons</taxon>
        <taxon>Gunneridae</taxon>
        <taxon>Pentapetalae</taxon>
        <taxon>rosids</taxon>
        <taxon>malvids</taxon>
        <taxon>Brassicales</taxon>
        <taxon>Brassicaceae</taxon>
        <taxon>Brassiceae</taxon>
        <taxon>Raphanus</taxon>
    </lineage>
</organism>
<sequence length="80" mass="8734">MAKFASIIALLFAALVLFAAFEAPTMVEAQKLCERPSGTWSGVCGNNNACKNQCINLEKARHGSCNYVFPAHKCICYFPC</sequence>
<proteinExistence type="evidence at protein level"/>